<comment type="function">
    <text evidence="1">Cytochrome c oxidase subunit which plays a role in assembly of respiratory supercomplexes.</text>
</comment>
<comment type="subunit">
    <text evidence="1">Associates with the respiratory chain complex III/complex IV supercomplex.</text>
</comment>
<comment type="subcellular location">
    <subcellularLocation>
        <location evidence="3">Mitochondrion membrane</location>
        <topology evidence="3">Multi-pass membrane protein</topology>
    </subcellularLocation>
</comment>
<comment type="similarity">
    <text evidence="4">Belongs to the RCF1 family.</text>
</comment>
<gene>
    <name type="primary">RCF1</name>
    <name type="synonym">AIM31</name>
    <name type="ordered locus">PAS_chr1-3_0297</name>
</gene>
<organism>
    <name type="scientific">Komagataella phaffii (strain GS115 / ATCC 20864)</name>
    <name type="common">Yeast</name>
    <name type="synonym">Pichia pastoris</name>
    <dbReference type="NCBI Taxonomy" id="644223"/>
    <lineage>
        <taxon>Eukaryota</taxon>
        <taxon>Fungi</taxon>
        <taxon>Dikarya</taxon>
        <taxon>Ascomycota</taxon>
        <taxon>Saccharomycotina</taxon>
        <taxon>Pichiomycetes</taxon>
        <taxon>Pichiales</taxon>
        <taxon>Pichiaceae</taxon>
        <taxon>Komagataella</taxon>
    </lineage>
</organism>
<evidence type="ECO:0000250" key="1"/>
<evidence type="ECO:0000255" key="2"/>
<evidence type="ECO:0000255" key="3">
    <source>
        <dbReference type="PROSITE-ProRule" id="PRU00836"/>
    </source>
</evidence>
<evidence type="ECO:0000305" key="4"/>
<name>RCF1_KOMPG</name>
<feature type="chain" id="PRO_0000399650" description="Respiratory supercomplex factor 1, mitochondrial">
    <location>
        <begin position="1"/>
        <end position="152"/>
    </location>
</feature>
<feature type="transmembrane region" description="Helical" evidence="3">
    <location>
        <begin position="34"/>
        <end position="50"/>
    </location>
</feature>
<feature type="transmembrane region" description="Helical" evidence="3">
    <location>
        <begin position="64"/>
        <end position="86"/>
    </location>
</feature>
<feature type="domain" description="HIG1" evidence="3">
    <location>
        <begin position="6"/>
        <end position="97"/>
    </location>
</feature>
<feature type="coiled-coil region" evidence="2">
    <location>
        <begin position="113"/>
        <end position="143"/>
    </location>
</feature>
<dbReference type="EMBL" id="FN392319">
    <property type="protein sequence ID" value="CAY67152.1"/>
    <property type="molecule type" value="Genomic_DNA"/>
</dbReference>
<dbReference type="RefSeq" id="XP_002489433.1">
    <property type="nucleotide sequence ID" value="XM_002489388.1"/>
</dbReference>
<dbReference type="FunCoup" id="C4QV79">
    <property type="interactions" value="91"/>
</dbReference>
<dbReference type="STRING" id="644223.C4QV79"/>
<dbReference type="EnsemblFungi" id="CAY67152">
    <property type="protein sequence ID" value="CAY67152"/>
    <property type="gene ID" value="PAS_chr1-3_0297"/>
</dbReference>
<dbReference type="GeneID" id="8197404"/>
<dbReference type="KEGG" id="ppa:PAS_chr1-3_0297"/>
<dbReference type="eggNOG" id="KOG4431">
    <property type="taxonomic scope" value="Eukaryota"/>
</dbReference>
<dbReference type="HOGENOM" id="CLU_087356_1_0_1"/>
<dbReference type="InParanoid" id="C4QV79"/>
<dbReference type="OMA" id="QRWIREL"/>
<dbReference type="OrthoDB" id="6604018at2759"/>
<dbReference type="Proteomes" id="UP000000314">
    <property type="component" value="Chromosome 1"/>
</dbReference>
<dbReference type="GO" id="GO:0005743">
    <property type="term" value="C:mitochondrial inner membrane"/>
    <property type="evidence" value="ECO:0007669"/>
    <property type="project" value="EnsemblFungi"/>
</dbReference>
<dbReference type="GO" id="GO:0098803">
    <property type="term" value="C:respiratory chain complex"/>
    <property type="evidence" value="ECO:0007669"/>
    <property type="project" value="EnsemblFungi"/>
</dbReference>
<dbReference type="GO" id="GO:0033617">
    <property type="term" value="P:mitochondrial cytochrome c oxidase assembly"/>
    <property type="evidence" value="ECO:0007669"/>
    <property type="project" value="EnsemblFungi"/>
</dbReference>
<dbReference type="GO" id="GO:0097250">
    <property type="term" value="P:mitochondrial respirasome assembly"/>
    <property type="evidence" value="ECO:0007669"/>
    <property type="project" value="EnsemblFungi"/>
</dbReference>
<dbReference type="GO" id="GO:0010155">
    <property type="term" value="P:regulation of proton transport"/>
    <property type="evidence" value="ECO:0007669"/>
    <property type="project" value="EnsemblFungi"/>
</dbReference>
<dbReference type="Gene3D" id="6.10.140.1320">
    <property type="match status" value="1"/>
</dbReference>
<dbReference type="InterPro" id="IPR007667">
    <property type="entry name" value="Hypoxia_induced_domain"/>
</dbReference>
<dbReference type="InterPro" id="IPR050355">
    <property type="entry name" value="RCF1"/>
</dbReference>
<dbReference type="PANTHER" id="PTHR12297:SF3">
    <property type="entry name" value="HIG1 DOMAIN FAMILY MEMBER 1A"/>
    <property type="match status" value="1"/>
</dbReference>
<dbReference type="PANTHER" id="PTHR12297">
    <property type="entry name" value="HYPOXIA-INDUCBILE GENE 1 HIG1 -RELATED"/>
    <property type="match status" value="1"/>
</dbReference>
<dbReference type="Pfam" id="PF04588">
    <property type="entry name" value="HIG_1_N"/>
    <property type="match status" value="1"/>
</dbReference>
<dbReference type="PROSITE" id="PS51503">
    <property type="entry name" value="HIG1"/>
    <property type="match status" value="1"/>
</dbReference>
<proteinExistence type="inferred from homology"/>
<reference key="1">
    <citation type="journal article" date="2009" name="Nat. Biotechnol.">
        <title>Genome sequence of the recombinant protein production host Pichia pastoris.</title>
        <authorList>
            <person name="De Schutter K."/>
            <person name="Lin Y.-C."/>
            <person name="Tiels P."/>
            <person name="Van Hecke A."/>
            <person name="Glinka S."/>
            <person name="Weber-Lehmann J."/>
            <person name="Rouze P."/>
            <person name="Van de Peer Y."/>
            <person name="Callewaert N."/>
        </authorList>
    </citation>
    <scope>NUCLEOTIDE SEQUENCE [LARGE SCALE GENOMIC DNA]</scope>
    <source>
        <strain>GS115 / ATCC 20864</strain>
    </source>
</reference>
<protein>
    <recommendedName>
        <fullName>Respiratory supercomplex factor 1, mitochondrial</fullName>
    </recommendedName>
</protein>
<keyword id="KW-0175">Coiled coil</keyword>
<keyword id="KW-0472">Membrane</keyword>
<keyword id="KW-0496">Mitochondrion</keyword>
<keyword id="KW-1185">Reference proteome</keyword>
<keyword id="KW-0812">Transmembrane</keyword>
<keyword id="KW-1133">Transmembrane helix</keyword>
<sequence>MASVNYPSSFDKKDEFEDMSILDKIWFRCKQQPLVPIGCLATCVAVALAAKGVRTGDRVNAQKWFRWRVGLQGLTLVALVGGSYIYDRQQVTQRKTDEDLAREKAQHRQDLWIQELERRDQETKRNKERARLARARLEAERSTGILDDEPPK</sequence>
<accession>C4QV79</accession>